<feature type="chain" id="PRO_0000254813" description="Cytochrome b">
    <location>
        <begin position="1"/>
        <end position="381"/>
    </location>
</feature>
<feature type="transmembrane region" description="Helical" evidence="2">
    <location>
        <begin position="33"/>
        <end position="53"/>
    </location>
</feature>
<feature type="transmembrane region" description="Helical" evidence="2">
    <location>
        <begin position="77"/>
        <end position="98"/>
    </location>
</feature>
<feature type="transmembrane region" description="Helical" evidence="2">
    <location>
        <begin position="113"/>
        <end position="133"/>
    </location>
</feature>
<feature type="transmembrane region" description="Helical" evidence="2">
    <location>
        <begin position="178"/>
        <end position="198"/>
    </location>
</feature>
<feature type="transmembrane region" description="Helical" evidence="2">
    <location>
        <begin position="226"/>
        <end position="246"/>
    </location>
</feature>
<feature type="transmembrane region" description="Helical" evidence="2">
    <location>
        <begin position="288"/>
        <end position="308"/>
    </location>
</feature>
<feature type="transmembrane region" description="Helical" evidence="2">
    <location>
        <begin position="320"/>
        <end position="340"/>
    </location>
</feature>
<feature type="transmembrane region" description="Helical" evidence="2">
    <location>
        <begin position="347"/>
        <end position="367"/>
    </location>
</feature>
<feature type="binding site" description="axial binding residue" evidence="2">
    <location>
        <position position="83"/>
    </location>
    <ligand>
        <name>heme b</name>
        <dbReference type="ChEBI" id="CHEBI:60344"/>
        <label>b562</label>
    </ligand>
    <ligandPart>
        <name>Fe</name>
        <dbReference type="ChEBI" id="CHEBI:18248"/>
    </ligandPart>
</feature>
<feature type="binding site" description="axial binding residue" evidence="2">
    <location>
        <position position="97"/>
    </location>
    <ligand>
        <name>heme b</name>
        <dbReference type="ChEBI" id="CHEBI:60344"/>
        <label>b566</label>
    </ligand>
    <ligandPart>
        <name>Fe</name>
        <dbReference type="ChEBI" id="CHEBI:18248"/>
    </ligandPart>
</feature>
<feature type="binding site" description="axial binding residue" evidence="2">
    <location>
        <position position="182"/>
    </location>
    <ligand>
        <name>heme b</name>
        <dbReference type="ChEBI" id="CHEBI:60344"/>
        <label>b562</label>
    </ligand>
    <ligandPart>
        <name>Fe</name>
        <dbReference type="ChEBI" id="CHEBI:18248"/>
    </ligandPart>
</feature>
<feature type="binding site" description="axial binding residue" evidence="2">
    <location>
        <position position="196"/>
    </location>
    <ligand>
        <name>heme b</name>
        <dbReference type="ChEBI" id="CHEBI:60344"/>
        <label>b566</label>
    </ligand>
    <ligandPart>
        <name>Fe</name>
        <dbReference type="ChEBI" id="CHEBI:18248"/>
    </ligandPart>
</feature>
<feature type="binding site" evidence="2">
    <location>
        <position position="201"/>
    </location>
    <ligand>
        <name>a ubiquinone</name>
        <dbReference type="ChEBI" id="CHEBI:16389"/>
    </ligand>
</feature>
<sequence length="381" mass="43083">MTNLRKTHPLMKIINHAFIDLPAPSNISAWWNFGSLLGICLIIQMLTGLFLAMHYTSDTLTAFSSVAHICRDVNYGWLIRNMHANGASMFFMCLFIHVGRGIYYGSYMYKETWNIGVILLLTVMATAFVGYVLPWGQMSFWGATVITNLLSAIPYIGTTLVEWIWGGFSVDKATLTRFFAFHFILPFIVTALVIVHLLFLHETGSNNPTGLNPDSDKIPFHPYYTIKDTLGFIMMILALLLLTMFSPDMLGDPDNFSPANPLNTPPHIKPEWYFLFAYAILRSIPNKLGGVLALLASILILLIIPLLHTSKQRSLMFRPISQTLFWLLTSDLLILTWIGGQPVEQPFIIIGQIASITYFLIIIAFMPMAGLFENYMLKPKW</sequence>
<comment type="function">
    <text evidence="2">Component of the ubiquinol-cytochrome c reductase complex (complex III or cytochrome b-c1 complex) that is part of the mitochondrial respiratory chain. The b-c1 complex mediates electron transfer from ubiquinol to cytochrome c. Contributes to the generation of a proton gradient across the mitochondrial membrane that is then used for ATP synthesis.</text>
</comment>
<comment type="cofactor">
    <cofactor evidence="2">
        <name>heme b</name>
        <dbReference type="ChEBI" id="CHEBI:60344"/>
    </cofactor>
    <text evidence="2">Binds 2 heme b groups non-covalently.</text>
</comment>
<comment type="subunit">
    <text evidence="2">The cytochrome bc1 complex contains 11 subunits: 3 respiratory subunits (MT-CYB, CYC1 and UQCRFS1), 2 core proteins (UQCRC1 and UQCRC2) and 6 low-molecular weight proteins (UQCRH/QCR6, UQCRB/QCR7, UQCRQ/QCR8, UQCR10/QCR9, UQCR11/QCR10 and a cleavage product of UQCRFS1). This cytochrome bc1 complex then forms a dimer.</text>
</comment>
<comment type="subcellular location">
    <subcellularLocation>
        <location evidence="2">Mitochondrion inner membrane</location>
        <topology evidence="2">Multi-pass membrane protein</topology>
    </subcellularLocation>
</comment>
<comment type="miscellaneous">
    <text evidence="1">Heme 1 (or BL or b562) is low-potential and absorbs at about 562 nm, and heme 2 (or BH or b566) is high-potential and absorbs at about 566 nm.</text>
</comment>
<comment type="similarity">
    <text evidence="3 4">Belongs to the cytochrome b family.</text>
</comment>
<comment type="caution">
    <text evidence="2">The full-length protein contains only eight transmembrane helices, not nine as predicted by bioinformatics tools.</text>
</comment>
<reference key="1">
    <citation type="journal article" date="2004" name="Gene">
        <title>Marsupial relationships and a timeline for marsupial radiation in South Gondwana.</title>
        <authorList>
            <person name="Nilsson M.A."/>
            <person name="Arnason U."/>
            <person name="Spencer P.B.S."/>
            <person name="Janke A."/>
        </authorList>
    </citation>
    <scope>NUCLEOTIDE SEQUENCE [GENOMIC DNA]</scope>
    <source>
        <tissue>Liver</tissue>
    </source>
</reference>
<accession>Q5QS28</accession>
<gene>
    <name type="primary">MT-CYB</name>
    <name type="synonym">COB</name>
    <name type="synonym">CYTB</name>
    <name type="synonym">MTCYB</name>
</gene>
<proteinExistence type="inferred from homology"/>
<keyword id="KW-0249">Electron transport</keyword>
<keyword id="KW-0349">Heme</keyword>
<keyword id="KW-0408">Iron</keyword>
<keyword id="KW-0472">Membrane</keyword>
<keyword id="KW-0479">Metal-binding</keyword>
<keyword id="KW-0496">Mitochondrion</keyword>
<keyword id="KW-0999">Mitochondrion inner membrane</keyword>
<keyword id="KW-0679">Respiratory chain</keyword>
<keyword id="KW-0812">Transmembrane</keyword>
<keyword id="KW-1133">Transmembrane helix</keyword>
<keyword id="KW-0813">Transport</keyword>
<keyword id="KW-0830">Ubiquinone</keyword>
<name>CYB_MACLA</name>
<geneLocation type="mitochondrion"/>
<evidence type="ECO:0000250" key="1"/>
<evidence type="ECO:0000250" key="2">
    <source>
        <dbReference type="UniProtKB" id="P00157"/>
    </source>
</evidence>
<evidence type="ECO:0000255" key="3">
    <source>
        <dbReference type="PROSITE-ProRule" id="PRU00967"/>
    </source>
</evidence>
<evidence type="ECO:0000255" key="4">
    <source>
        <dbReference type="PROSITE-ProRule" id="PRU00968"/>
    </source>
</evidence>
<dbReference type="EMBL" id="AJ639871">
    <property type="protein sequence ID" value="CAG26419.1"/>
    <property type="molecule type" value="Genomic_DNA"/>
</dbReference>
<dbReference type="RefSeq" id="YP_161233.1">
    <property type="nucleotide sequence ID" value="NC_006520.1"/>
</dbReference>
<dbReference type="SMR" id="Q5QS28"/>
<dbReference type="GeneID" id="3187249"/>
<dbReference type="CTD" id="4519"/>
<dbReference type="GO" id="GO:0005743">
    <property type="term" value="C:mitochondrial inner membrane"/>
    <property type="evidence" value="ECO:0007669"/>
    <property type="project" value="UniProtKB-SubCell"/>
</dbReference>
<dbReference type="GO" id="GO:0045275">
    <property type="term" value="C:respiratory chain complex III"/>
    <property type="evidence" value="ECO:0007669"/>
    <property type="project" value="InterPro"/>
</dbReference>
<dbReference type="GO" id="GO:0046872">
    <property type="term" value="F:metal ion binding"/>
    <property type="evidence" value="ECO:0007669"/>
    <property type="project" value="UniProtKB-KW"/>
</dbReference>
<dbReference type="GO" id="GO:0008121">
    <property type="term" value="F:ubiquinol-cytochrome-c reductase activity"/>
    <property type="evidence" value="ECO:0007669"/>
    <property type="project" value="InterPro"/>
</dbReference>
<dbReference type="GO" id="GO:0006122">
    <property type="term" value="P:mitochondrial electron transport, ubiquinol to cytochrome c"/>
    <property type="evidence" value="ECO:0007669"/>
    <property type="project" value="TreeGrafter"/>
</dbReference>
<dbReference type="CDD" id="cd00290">
    <property type="entry name" value="cytochrome_b_C"/>
    <property type="match status" value="1"/>
</dbReference>
<dbReference type="CDD" id="cd00284">
    <property type="entry name" value="Cytochrome_b_N"/>
    <property type="match status" value="1"/>
</dbReference>
<dbReference type="FunFam" id="1.20.810.10:FF:000002">
    <property type="entry name" value="Cytochrome b"/>
    <property type="match status" value="1"/>
</dbReference>
<dbReference type="Gene3D" id="1.20.810.10">
    <property type="entry name" value="Cytochrome Bc1 Complex, Chain C"/>
    <property type="match status" value="1"/>
</dbReference>
<dbReference type="InterPro" id="IPR005798">
    <property type="entry name" value="Cyt_b/b6_C"/>
</dbReference>
<dbReference type="InterPro" id="IPR036150">
    <property type="entry name" value="Cyt_b/b6_C_sf"/>
</dbReference>
<dbReference type="InterPro" id="IPR005797">
    <property type="entry name" value="Cyt_b/b6_N"/>
</dbReference>
<dbReference type="InterPro" id="IPR027387">
    <property type="entry name" value="Cytb/b6-like_sf"/>
</dbReference>
<dbReference type="InterPro" id="IPR030689">
    <property type="entry name" value="Cytochrome_b"/>
</dbReference>
<dbReference type="InterPro" id="IPR048260">
    <property type="entry name" value="Cytochrome_b_C_euk/bac"/>
</dbReference>
<dbReference type="InterPro" id="IPR048259">
    <property type="entry name" value="Cytochrome_b_N_euk/bac"/>
</dbReference>
<dbReference type="InterPro" id="IPR016174">
    <property type="entry name" value="Di-haem_cyt_TM"/>
</dbReference>
<dbReference type="PANTHER" id="PTHR19271">
    <property type="entry name" value="CYTOCHROME B"/>
    <property type="match status" value="1"/>
</dbReference>
<dbReference type="PANTHER" id="PTHR19271:SF16">
    <property type="entry name" value="CYTOCHROME B"/>
    <property type="match status" value="1"/>
</dbReference>
<dbReference type="Pfam" id="PF00032">
    <property type="entry name" value="Cytochrom_B_C"/>
    <property type="match status" value="1"/>
</dbReference>
<dbReference type="Pfam" id="PF00033">
    <property type="entry name" value="Cytochrome_B"/>
    <property type="match status" value="1"/>
</dbReference>
<dbReference type="PIRSF" id="PIRSF038885">
    <property type="entry name" value="COB"/>
    <property type="match status" value="1"/>
</dbReference>
<dbReference type="SUPFAM" id="SSF81648">
    <property type="entry name" value="a domain/subunit of cytochrome bc1 complex (Ubiquinol-cytochrome c reductase)"/>
    <property type="match status" value="1"/>
</dbReference>
<dbReference type="SUPFAM" id="SSF81342">
    <property type="entry name" value="Transmembrane di-heme cytochromes"/>
    <property type="match status" value="1"/>
</dbReference>
<dbReference type="PROSITE" id="PS51003">
    <property type="entry name" value="CYTB_CTER"/>
    <property type="match status" value="1"/>
</dbReference>
<dbReference type="PROSITE" id="PS51002">
    <property type="entry name" value="CYTB_NTER"/>
    <property type="match status" value="1"/>
</dbReference>
<organism>
    <name type="scientific">Macrotis lagotis</name>
    <name type="common">Greater bilby</name>
    <dbReference type="NCBI Taxonomy" id="92651"/>
    <lineage>
        <taxon>Eukaryota</taxon>
        <taxon>Metazoa</taxon>
        <taxon>Chordata</taxon>
        <taxon>Craniata</taxon>
        <taxon>Vertebrata</taxon>
        <taxon>Euteleostomi</taxon>
        <taxon>Mammalia</taxon>
        <taxon>Metatheria</taxon>
        <taxon>Peramelemorphia</taxon>
        <taxon>Peramelidae</taxon>
        <taxon>Macrotis</taxon>
    </lineage>
</organism>
<protein>
    <recommendedName>
        <fullName>Cytochrome b</fullName>
    </recommendedName>
    <alternativeName>
        <fullName>Complex III subunit 3</fullName>
    </alternativeName>
    <alternativeName>
        <fullName>Complex III subunit III</fullName>
    </alternativeName>
    <alternativeName>
        <fullName>Cytochrome b-c1 complex subunit 3</fullName>
    </alternativeName>
    <alternativeName>
        <fullName>Ubiquinol-cytochrome-c reductase complex cytochrome b subunit</fullName>
    </alternativeName>
</protein>